<reference key="1">
    <citation type="journal article" date="2003" name="Nature">
        <title>Genome sequence of Bacillus cereus and comparative analysis with Bacillus anthracis.</title>
        <authorList>
            <person name="Ivanova N."/>
            <person name="Sorokin A."/>
            <person name="Anderson I."/>
            <person name="Galleron N."/>
            <person name="Candelon B."/>
            <person name="Kapatral V."/>
            <person name="Bhattacharyya A."/>
            <person name="Reznik G."/>
            <person name="Mikhailova N."/>
            <person name="Lapidus A."/>
            <person name="Chu L."/>
            <person name="Mazur M."/>
            <person name="Goltsman E."/>
            <person name="Larsen N."/>
            <person name="D'Souza M."/>
            <person name="Walunas T."/>
            <person name="Grechkin Y."/>
            <person name="Pusch G."/>
            <person name="Haselkorn R."/>
            <person name="Fonstein M."/>
            <person name="Ehrlich S.D."/>
            <person name="Overbeek R."/>
            <person name="Kyrpides N.C."/>
        </authorList>
    </citation>
    <scope>NUCLEOTIDE SEQUENCE [LARGE SCALE GENOMIC DNA]</scope>
    <source>
        <strain>ATCC 14579 / DSM 31 / CCUG 7414 / JCM 2152 / NBRC 15305 / NCIMB 9373 / NCTC 2599 / NRRL B-3711</strain>
    </source>
</reference>
<evidence type="ECO:0000255" key="1">
    <source>
        <dbReference type="HAMAP-Rule" id="MF_00733"/>
    </source>
</evidence>
<feature type="chain" id="PRO_0000056505" description="1-pyrroline-5-carboxylate dehydrogenase">
    <location>
        <begin position="1"/>
        <end position="515"/>
    </location>
</feature>
<feature type="active site" evidence="1">
    <location>
        <position position="286"/>
    </location>
</feature>
<feature type="active site" evidence="1">
    <location>
        <position position="320"/>
    </location>
</feature>
<name>ROCA_BACCR</name>
<comment type="catalytic activity">
    <reaction evidence="1">
        <text>L-glutamate 5-semialdehyde + NAD(+) + H2O = L-glutamate + NADH + 2 H(+)</text>
        <dbReference type="Rhea" id="RHEA:30235"/>
        <dbReference type="ChEBI" id="CHEBI:15377"/>
        <dbReference type="ChEBI" id="CHEBI:15378"/>
        <dbReference type="ChEBI" id="CHEBI:29985"/>
        <dbReference type="ChEBI" id="CHEBI:57540"/>
        <dbReference type="ChEBI" id="CHEBI:57945"/>
        <dbReference type="ChEBI" id="CHEBI:58066"/>
        <dbReference type="EC" id="1.2.1.88"/>
    </reaction>
</comment>
<comment type="pathway">
    <text evidence="1">Amino-acid degradation; L-proline degradation into L-glutamate; L-glutamate from L-proline: step 2/2.</text>
</comment>
<comment type="similarity">
    <text evidence="1">Belongs to the aldehyde dehydrogenase family. RocA subfamily.</text>
</comment>
<sequence>MVVAYKHEPFTDFSVEANKLAFEEGLKKVESYLGQDYPLIIGGEKITTEDKIVSVNPANKEELVGRVSKASRELAEKAMQVADETFQTWRKSKPEMRADILFRAAAIVRRRKHEFSAILVKEAGKPWNEADADTAEAIDFMEYYGRQMLKLKDGIPVESRPIEYNRFSYIPLGVGVIISPWNFPFAIMAGMTTAALVSGNTVLLKPASTTPVVAAKFMEVLEEAGLPAGVVNFVPGNGSEVGDYLVDHPRTRFVSFTGSRDVGIRIYERAAKVNPGQIWLKRVIAEMGGKDTIVVDKEADLELAAKSIVASAFGFSGQKCSACSRAVIHEDVYDHVLNRAVELTKELTVANPAVLGTNMGPVNDQAAFDKVMSYVAIGKEEGRILAGGEGDDSKGWFIQPTIVADVAEDARLMKEEIFGPVVAFCKAKDFDHALAIANNTEYGLTGAVITNNRDHIEKAREDFHVGNLYFNRGCTGAIVGYQPFGGFNMSGTDSKAGGPDYLALHMQAKTTSETL</sequence>
<accession>Q81IP0</accession>
<proteinExistence type="inferred from homology"/>
<gene>
    <name evidence="1" type="primary">rocA</name>
    <name type="ordered locus">BC_0344</name>
</gene>
<keyword id="KW-0520">NAD</keyword>
<keyword id="KW-0560">Oxidoreductase</keyword>
<keyword id="KW-1185">Reference proteome</keyword>
<organism>
    <name type="scientific">Bacillus cereus (strain ATCC 14579 / DSM 31 / CCUG 7414 / JCM 2152 / NBRC 15305 / NCIMB 9373 / NCTC 2599 / NRRL B-3711)</name>
    <dbReference type="NCBI Taxonomy" id="226900"/>
    <lineage>
        <taxon>Bacteria</taxon>
        <taxon>Bacillati</taxon>
        <taxon>Bacillota</taxon>
        <taxon>Bacilli</taxon>
        <taxon>Bacillales</taxon>
        <taxon>Bacillaceae</taxon>
        <taxon>Bacillus</taxon>
        <taxon>Bacillus cereus group</taxon>
    </lineage>
</organism>
<dbReference type="EC" id="1.2.1.88" evidence="1"/>
<dbReference type="EMBL" id="AE016877">
    <property type="protein sequence ID" value="AAP07384.1"/>
    <property type="molecule type" value="Genomic_DNA"/>
</dbReference>
<dbReference type="RefSeq" id="NP_830183.1">
    <property type="nucleotide sequence ID" value="NC_004722.1"/>
</dbReference>
<dbReference type="SMR" id="Q81IP0"/>
<dbReference type="STRING" id="226900.BC_0344"/>
<dbReference type="MetOSite" id="Q81IP0"/>
<dbReference type="KEGG" id="bce:BC0344"/>
<dbReference type="PATRIC" id="fig|226900.8.peg.315"/>
<dbReference type="HOGENOM" id="CLU_005391_0_0_9"/>
<dbReference type="OrthoDB" id="9762913at2"/>
<dbReference type="UniPathway" id="UPA00261">
    <property type="reaction ID" value="UER00374"/>
</dbReference>
<dbReference type="Proteomes" id="UP000001417">
    <property type="component" value="Chromosome"/>
</dbReference>
<dbReference type="GO" id="GO:0009898">
    <property type="term" value="C:cytoplasmic side of plasma membrane"/>
    <property type="evidence" value="ECO:0000318"/>
    <property type="project" value="GO_Central"/>
</dbReference>
<dbReference type="GO" id="GO:0003842">
    <property type="term" value="F:1-pyrroline-5-carboxylate dehydrogenase activity"/>
    <property type="evidence" value="ECO:0000318"/>
    <property type="project" value="GO_Central"/>
</dbReference>
<dbReference type="GO" id="GO:0006537">
    <property type="term" value="P:glutamate biosynthetic process"/>
    <property type="evidence" value="ECO:0007669"/>
    <property type="project" value="UniProtKB-UniRule"/>
</dbReference>
<dbReference type="GO" id="GO:0010133">
    <property type="term" value="P:proline catabolic process to glutamate"/>
    <property type="evidence" value="ECO:0000318"/>
    <property type="project" value="GO_Central"/>
</dbReference>
<dbReference type="CDD" id="cd07124">
    <property type="entry name" value="ALDH_PutA-P5CDH-RocA"/>
    <property type="match status" value="1"/>
</dbReference>
<dbReference type="FunFam" id="3.40.309.10:FF:000005">
    <property type="entry name" value="1-pyrroline-5-carboxylate dehydrogenase 1"/>
    <property type="match status" value="1"/>
</dbReference>
<dbReference type="FunFam" id="3.40.605.10:FF:000045">
    <property type="entry name" value="1-pyrroline-5-carboxylate dehydrogenase 1"/>
    <property type="match status" value="1"/>
</dbReference>
<dbReference type="Gene3D" id="3.40.605.10">
    <property type="entry name" value="Aldehyde Dehydrogenase, Chain A, domain 1"/>
    <property type="match status" value="1"/>
</dbReference>
<dbReference type="Gene3D" id="3.40.309.10">
    <property type="entry name" value="Aldehyde Dehydrogenase, Chain A, domain 2"/>
    <property type="match status" value="1"/>
</dbReference>
<dbReference type="HAMAP" id="MF_00733">
    <property type="entry name" value="RocA"/>
    <property type="match status" value="1"/>
</dbReference>
<dbReference type="InterPro" id="IPR016161">
    <property type="entry name" value="Ald_DH/histidinol_DH"/>
</dbReference>
<dbReference type="InterPro" id="IPR016163">
    <property type="entry name" value="Ald_DH_C"/>
</dbReference>
<dbReference type="InterPro" id="IPR016160">
    <property type="entry name" value="Ald_DH_CS_CYS"/>
</dbReference>
<dbReference type="InterPro" id="IPR029510">
    <property type="entry name" value="Ald_DH_CS_GLU"/>
</dbReference>
<dbReference type="InterPro" id="IPR016162">
    <property type="entry name" value="Ald_DH_N"/>
</dbReference>
<dbReference type="InterPro" id="IPR015590">
    <property type="entry name" value="Aldehyde_DH_dom"/>
</dbReference>
<dbReference type="InterPro" id="IPR050485">
    <property type="entry name" value="Proline_metab_enzyme"/>
</dbReference>
<dbReference type="InterPro" id="IPR005932">
    <property type="entry name" value="RocA"/>
</dbReference>
<dbReference type="InterPro" id="IPR047597">
    <property type="entry name" value="RocA_bacillales"/>
</dbReference>
<dbReference type="NCBIfam" id="TIGR01237">
    <property type="entry name" value="D1pyr5carbox2"/>
    <property type="match status" value="1"/>
</dbReference>
<dbReference type="NCBIfam" id="NF002852">
    <property type="entry name" value="PRK03137.1"/>
    <property type="match status" value="1"/>
</dbReference>
<dbReference type="PANTHER" id="PTHR42862">
    <property type="entry name" value="DELTA-1-PYRROLINE-5-CARBOXYLATE DEHYDROGENASE 1, ISOFORM A-RELATED"/>
    <property type="match status" value="1"/>
</dbReference>
<dbReference type="PANTHER" id="PTHR42862:SF1">
    <property type="entry name" value="DELTA-1-PYRROLINE-5-CARBOXYLATE DEHYDROGENASE 2, ISOFORM A-RELATED"/>
    <property type="match status" value="1"/>
</dbReference>
<dbReference type="Pfam" id="PF00171">
    <property type="entry name" value="Aldedh"/>
    <property type="match status" value="1"/>
</dbReference>
<dbReference type="SUPFAM" id="SSF53720">
    <property type="entry name" value="ALDH-like"/>
    <property type="match status" value="1"/>
</dbReference>
<dbReference type="PROSITE" id="PS00070">
    <property type="entry name" value="ALDEHYDE_DEHYDR_CYS"/>
    <property type="match status" value="1"/>
</dbReference>
<dbReference type="PROSITE" id="PS00687">
    <property type="entry name" value="ALDEHYDE_DEHYDR_GLU"/>
    <property type="match status" value="1"/>
</dbReference>
<protein>
    <recommendedName>
        <fullName evidence="1">1-pyrroline-5-carboxylate dehydrogenase</fullName>
        <shortName evidence="1">P5C dehydrogenase</shortName>
        <ecNumber evidence="1">1.2.1.88</ecNumber>
    </recommendedName>
    <alternativeName>
        <fullName evidence="1">L-glutamate gamma-semialdehyde dehydrogenase</fullName>
    </alternativeName>
</protein>